<gene>
    <name evidence="1" type="primary">rlmH</name>
    <name type="ordered locus">lpp1331</name>
</gene>
<name>RLMH_LEGPA</name>
<evidence type="ECO:0000255" key="1">
    <source>
        <dbReference type="HAMAP-Rule" id="MF_00658"/>
    </source>
</evidence>
<proteinExistence type="inferred from homology"/>
<dbReference type="EC" id="2.1.1.177" evidence="1"/>
<dbReference type="EMBL" id="CR628336">
    <property type="protein sequence ID" value="CAH12482.1"/>
    <property type="molecule type" value="Genomic_DNA"/>
</dbReference>
<dbReference type="RefSeq" id="WP_011213672.1">
    <property type="nucleotide sequence ID" value="NC_006368.1"/>
</dbReference>
<dbReference type="SMR" id="Q5X5I9"/>
<dbReference type="KEGG" id="lpp:lpp1331"/>
<dbReference type="LegioList" id="lpp1331"/>
<dbReference type="HOGENOM" id="CLU_100552_1_0_6"/>
<dbReference type="GO" id="GO:0005737">
    <property type="term" value="C:cytoplasm"/>
    <property type="evidence" value="ECO:0007669"/>
    <property type="project" value="UniProtKB-SubCell"/>
</dbReference>
<dbReference type="GO" id="GO:0070038">
    <property type="term" value="F:rRNA (pseudouridine-N3-)-methyltransferase activity"/>
    <property type="evidence" value="ECO:0007669"/>
    <property type="project" value="UniProtKB-UniRule"/>
</dbReference>
<dbReference type="CDD" id="cd18081">
    <property type="entry name" value="RlmH-like"/>
    <property type="match status" value="1"/>
</dbReference>
<dbReference type="Gene3D" id="3.40.1280.10">
    <property type="match status" value="1"/>
</dbReference>
<dbReference type="HAMAP" id="MF_00658">
    <property type="entry name" value="23SrRNA_methyltr_H"/>
    <property type="match status" value="1"/>
</dbReference>
<dbReference type="InterPro" id="IPR029028">
    <property type="entry name" value="Alpha/beta_knot_MTases"/>
</dbReference>
<dbReference type="InterPro" id="IPR003742">
    <property type="entry name" value="RlmH-like"/>
</dbReference>
<dbReference type="InterPro" id="IPR029026">
    <property type="entry name" value="tRNA_m1G_MTases_N"/>
</dbReference>
<dbReference type="NCBIfam" id="NF000986">
    <property type="entry name" value="PRK00103.1-4"/>
    <property type="match status" value="1"/>
</dbReference>
<dbReference type="NCBIfam" id="TIGR00246">
    <property type="entry name" value="tRNA_RlmH_YbeA"/>
    <property type="match status" value="1"/>
</dbReference>
<dbReference type="PANTHER" id="PTHR33603">
    <property type="entry name" value="METHYLTRANSFERASE"/>
    <property type="match status" value="1"/>
</dbReference>
<dbReference type="PANTHER" id="PTHR33603:SF1">
    <property type="entry name" value="RIBOSOMAL RNA LARGE SUBUNIT METHYLTRANSFERASE H"/>
    <property type="match status" value="1"/>
</dbReference>
<dbReference type="Pfam" id="PF02590">
    <property type="entry name" value="SPOUT_MTase"/>
    <property type="match status" value="1"/>
</dbReference>
<dbReference type="PIRSF" id="PIRSF004505">
    <property type="entry name" value="MT_bac"/>
    <property type="match status" value="1"/>
</dbReference>
<dbReference type="SUPFAM" id="SSF75217">
    <property type="entry name" value="alpha/beta knot"/>
    <property type="match status" value="1"/>
</dbReference>
<feature type="chain" id="PRO_0000198135" description="Ribosomal RNA large subunit methyltransferase H">
    <location>
        <begin position="1"/>
        <end position="156"/>
    </location>
</feature>
<feature type="binding site" evidence="1">
    <location>
        <position position="74"/>
    </location>
    <ligand>
        <name>S-adenosyl-L-methionine</name>
        <dbReference type="ChEBI" id="CHEBI:59789"/>
    </ligand>
</feature>
<feature type="binding site" evidence="1">
    <location>
        <position position="105"/>
    </location>
    <ligand>
        <name>S-adenosyl-L-methionine</name>
        <dbReference type="ChEBI" id="CHEBI:59789"/>
    </ligand>
</feature>
<feature type="binding site" evidence="1">
    <location>
        <begin position="124"/>
        <end position="129"/>
    </location>
    <ligand>
        <name>S-adenosyl-L-methionine</name>
        <dbReference type="ChEBI" id="CHEBI:59789"/>
    </ligand>
</feature>
<organism>
    <name type="scientific">Legionella pneumophila (strain Paris)</name>
    <dbReference type="NCBI Taxonomy" id="297246"/>
    <lineage>
        <taxon>Bacteria</taxon>
        <taxon>Pseudomonadati</taxon>
        <taxon>Pseudomonadota</taxon>
        <taxon>Gammaproteobacteria</taxon>
        <taxon>Legionellales</taxon>
        <taxon>Legionellaceae</taxon>
        <taxon>Legionella</taxon>
    </lineage>
</organism>
<protein>
    <recommendedName>
        <fullName evidence="1">Ribosomal RNA large subunit methyltransferase H</fullName>
        <ecNumber evidence="1">2.1.1.177</ecNumber>
    </recommendedName>
    <alternativeName>
        <fullName evidence="1">23S rRNA (pseudouridine1915-N3)-methyltransferase</fullName>
    </alternativeName>
    <alternativeName>
        <fullName evidence="1">23S rRNA m3Psi1915 methyltransferase</fullName>
    </alternativeName>
    <alternativeName>
        <fullName evidence="1">rRNA (pseudouridine-N3-)-methyltransferase RlmH</fullName>
    </alternativeName>
</protein>
<sequence>MLKITIITLGNKMPDWVNSGVNEYAKRFHDGIQIKLIEIPLLRRNKSSDLARILEKESALIKDALPANARLIALDMLGKSFSSEELALKLTQLQQISSHLCFIIGGPEGLSNEILTLCDERWSLSKLTLPHPLVRIILLESLYRAWSIINNHPYHK</sequence>
<keyword id="KW-0963">Cytoplasm</keyword>
<keyword id="KW-0489">Methyltransferase</keyword>
<keyword id="KW-0698">rRNA processing</keyword>
<keyword id="KW-0949">S-adenosyl-L-methionine</keyword>
<keyword id="KW-0808">Transferase</keyword>
<comment type="function">
    <text evidence="1">Specifically methylates the pseudouridine at position 1915 (m3Psi1915) in 23S rRNA.</text>
</comment>
<comment type="catalytic activity">
    <reaction evidence="1">
        <text>pseudouridine(1915) in 23S rRNA + S-adenosyl-L-methionine = N(3)-methylpseudouridine(1915) in 23S rRNA + S-adenosyl-L-homocysteine + H(+)</text>
        <dbReference type="Rhea" id="RHEA:42752"/>
        <dbReference type="Rhea" id="RHEA-COMP:10221"/>
        <dbReference type="Rhea" id="RHEA-COMP:10222"/>
        <dbReference type="ChEBI" id="CHEBI:15378"/>
        <dbReference type="ChEBI" id="CHEBI:57856"/>
        <dbReference type="ChEBI" id="CHEBI:59789"/>
        <dbReference type="ChEBI" id="CHEBI:65314"/>
        <dbReference type="ChEBI" id="CHEBI:74486"/>
        <dbReference type="EC" id="2.1.1.177"/>
    </reaction>
</comment>
<comment type="subunit">
    <text evidence="1">Homodimer.</text>
</comment>
<comment type="subcellular location">
    <subcellularLocation>
        <location evidence="1">Cytoplasm</location>
    </subcellularLocation>
</comment>
<comment type="similarity">
    <text evidence="1">Belongs to the RNA methyltransferase RlmH family.</text>
</comment>
<accession>Q5X5I9</accession>
<reference key="1">
    <citation type="journal article" date="2004" name="Nat. Genet.">
        <title>Evidence in the Legionella pneumophila genome for exploitation of host cell functions and high genome plasticity.</title>
        <authorList>
            <person name="Cazalet C."/>
            <person name="Rusniok C."/>
            <person name="Brueggemann H."/>
            <person name="Zidane N."/>
            <person name="Magnier A."/>
            <person name="Ma L."/>
            <person name="Tichit M."/>
            <person name="Jarraud S."/>
            <person name="Bouchier C."/>
            <person name="Vandenesch F."/>
            <person name="Kunst F."/>
            <person name="Etienne J."/>
            <person name="Glaser P."/>
            <person name="Buchrieser C."/>
        </authorList>
    </citation>
    <scope>NUCLEOTIDE SEQUENCE [LARGE SCALE GENOMIC DNA]</scope>
    <source>
        <strain>Paris</strain>
    </source>
</reference>